<protein>
    <recommendedName>
        <fullName evidence="8">NAD(P) transhydrogenase, mitochondrial</fullName>
        <ecNumber evidence="4">7.1.1.1</ecNumber>
    </recommendedName>
    <alternativeName>
        <fullName evidence="8">Nicotinamide nucleotide transhydrogenase</fullName>
    </alternativeName>
</protein>
<proteinExistence type="evidence at protein level"/>
<dbReference type="EC" id="7.1.1.1" evidence="4"/>
<dbReference type="EMBL" id="AMGL01034992">
    <property type="status" value="NOT_ANNOTATED_CDS"/>
    <property type="molecule type" value="Genomic_DNA"/>
</dbReference>
<dbReference type="EMBL" id="AMGL01034993">
    <property type="status" value="NOT_ANNOTATED_CDS"/>
    <property type="molecule type" value="Genomic_DNA"/>
</dbReference>
<dbReference type="PDB" id="6QTI">
    <property type="method" value="X-ray"/>
    <property type="resolution" value="2.90 A"/>
    <property type="chains" value="A/B=1-1086"/>
</dbReference>
<dbReference type="PDB" id="6QUE">
    <property type="method" value="X-ray"/>
    <property type="resolution" value="3.70 A"/>
    <property type="chains" value="A/B=1-1086"/>
</dbReference>
<dbReference type="PDB" id="6S59">
    <property type="method" value="X-ray"/>
    <property type="resolution" value="3.70 A"/>
    <property type="chains" value="A/B=1-1086"/>
</dbReference>
<dbReference type="PDBsum" id="6QTI"/>
<dbReference type="PDBsum" id="6QUE"/>
<dbReference type="PDBsum" id="6S59"/>
<dbReference type="EMDB" id="EMD-10099"/>
<dbReference type="EMDB" id="EMD-4635"/>
<dbReference type="EMDB" id="EMD-4637"/>
<dbReference type="SMR" id="W5PFI3"/>
<dbReference type="STRING" id="9940.ENSOARP00000009198"/>
<dbReference type="PaxDb" id="9940-ENSOARP00000009198"/>
<dbReference type="Ensembl" id="ENSOART00185015599">
    <property type="protein sequence ID" value="ENSOARP00185007554"/>
    <property type="gene ID" value="ENSOARG00185009622"/>
</dbReference>
<dbReference type="Ensembl" id="ENSOART00215051691">
    <property type="protein sequence ID" value="ENSOARP00215027133"/>
    <property type="gene ID" value="ENSOARG00215030840"/>
</dbReference>
<dbReference type="Ensembl" id="ENSOART00220059941">
    <property type="protein sequence ID" value="ENSOARP00220032092"/>
    <property type="gene ID" value="ENSOARG00220036207"/>
</dbReference>
<dbReference type="Ensembl" id="ENSOART00260025291">
    <property type="protein sequence ID" value="ENSOARP00260012672"/>
    <property type="gene ID" value="ENSOARG00260015653"/>
</dbReference>
<dbReference type="eggNOG" id="ENOG502QQ0A">
    <property type="taxonomic scope" value="Eukaryota"/>
</dbReference>
<dbReference type="HOGENOM" id="CLU_003376_1_0_1"/>
<dbReference type="Proteomes" id="UP000002356">
    <property type="component" value="Unplaced"/>
</dbReference>
<dbReference type="GO" id="GO:0005743">
    <property type="term" value="C:mitochondrial inner membrane"/>
    <property type="evidence" value="ECO:0007669"/>
    <property type="project" value="UniProtKB-SubCell"/>
</dbReference>
<dbReference type="GO" id="GO:0042802">
    <property type="term" value="F:identical protein binding"/>
    <property type="evidence" value="ECO:0000353"/>
    <property type="project" value="IntAct"/>
</dbReference>
<dbReference type="GO" id="GO:0050661">
    <property type="term" value="F:NADP binding"/>
    <property type="evidence" value="ECO:0007669"/>
    <property type="project" value="TreeGrafter"/>
</dbReference>
<dbReference type="GO" id="GO:0016491">
    <property type="term" value="F:oxidoreductase activity"/>
    <property type="evidence" value="ECO:0007669"/>
    <property type="project" value="InterPro"/>
</dbReference>
<dbReference type="GO" id="GO:0008750">
    <property type="term" value="F:proton-translocating NAD(P)+ transhydrogenase activity"/>
    <property type="evidence" value="ECO:0007669"/>
    <property type="project" value="UniProtKB-EC"/>
</dbReference>
<dbReference type="GO" id="GO:0006740">
    <property type="term" value="P:NADPH regeneration"/>
    <property type="evidence" value="ECO:0007669"/>
    <property type="project" value="TreeGrafter"/>
</dbReference>
<dbReference type="CDD" id="cd05304">
    <property type="entry name" value="Rubrum_tdh"/>
    <property type="match status" value="1"/>
</dbReference>
<dbReference type="FunFam" id="3.40.50.720:FF:000028">
    <property type="entry name" value="NAD(P) transhydrogenase subunit alpha"/>
    <property type="match status" value="1"/>
</dbReference>
<dbReference type="FunFam" id="3.40.50.1220:FF:000002">
    <property type="entry name" value="NAD(P) transhydrogenase subunit beta"/>
    <property type="match status" value="1"/>
</dbReference>
<dbReference type="Gene3D" id="3.40.50.720">
    <property type="entry name" value="NAD(P)-binding Rossmann-like Domain"/>
    <property type="match status" value="2"/>
</dbReference>
<dbReference type="Gene3D" id="3.40.50.1220">
    <property type="entry name" value="TPP-binding domain"/>
    <property type="match status" value="1"/>
</dbReference>
<dbReference type="InterPro" id="IPR008143">
    <property type="entry name" value="Ala_DH/PNT_CS2"/>
</dbReference>
<dbReference type="InterPro" id="IPR008142">
    <property type="entry name" value="AlaDH/PNT_CS1"/>
</dbReference>
<dbReference type="InterPro" id="IPR007886">
    <property type="entry name" value="AlaDH/PNT_N"/>
</dbReference>
<dbReference type="InterPro" id="IPR007698">
    <property type="entry name" value="AlaDH/PNT_NAD(H)-bd"/>
</dbReference>
<dbReference type="InterPro" id="IPR029035">
    <property type="entry name" value="DHS-like_NAD/FAD-binding_dom"/>
</dbReference>
<dbReference type="InterPro" id="IPR036291">
    <property type="entry name" value="NAD(P)-bd_dom_sf"/>
</dbReference>
<dbReference type="InterPro" id="IPR026255">
    <property type="entry name" value="NADP_transhyd_a"/>
</dbReference>
<dbReference type="InterPro" id="IPR024605">
    <property type="entry name" value="NADP_transhyd_a_C"/>
</dbReference>
<dbReference type="InterPro" id="IPR034300">
    <property type="entry name" value="PNTB-like"/>
</dbReference>
<dbReference type="NCBIfam" id="TIGR00561">
    <property type="entry name" value="pntA"/>
    <property type="match status" value="1"/>
</dbReference>
<dbReference type="NCBIfam" id="NF006942">
    <property type="entry name" value="PRK09424.1"/>
    <property type="match status" value="1"/>
</dbReference>
<dbReference type="PANTHER" id="PTHR10160">
    <property type="entry name" value="NAD(P) TRANSHYDROGENASE"/>
    <property type="match status" value="1"/>
</dbReference>
<dbReference type="PANTHER" id="PTHR10160:SF22">
    <property type="entry name" value="NAD(P) TRANSHYDROGENASE, MITOCHONDRIAL"/>
    <property type="match status" value="1"/>
</dbReference>
<dbReference type="Pfam" id="PF01262">
    <property type="entry name" value="AlaDh_PNT_C"/>
    <property type="match status" value="1"/>
</dbReference>
<dbReference type="Pfam" id="PF05222">
    <property type="entry name" value="AlaDh_PNT_N"/>
    <property type="match status" value="1"/>
</dbReference>
<dbReference type="Pfam" id="PF02233">
    <property type="entry name" value="PNTB"/>
    <property type="match status" value="1"/>
</dbReference>
<dbReference type="Pfam" id="PF12769">
    <property type="entry name" value="PNTB_4TM"/>
    <property type="match status" value="1"/>
</dbReference>
<dbReference type="SMART" id="SM01002">
    <property type="entry name" value="AlaDh_PNT_C"/>
    <property type="match status" value="1"/>
</dbReference>
<dbReference type="SMART" id="SM01003">
    <property type="entry name" value="AlaDh_PNT_N"/>
    <property type="match status" value="1"/>
</dbReference>
<dbReference type="SUPFAM" id="SSF52467">
    <property type="entry name" value="DHS-like NAD/FAD-binding domain"/>
    <property type="match status" value="1"/>
</dbReference>
<dbReference type="SUPFAM" id="SSF52283">
    <property type="entry name" value="Formate/glycerate dehydrogenase catalytic domain-like"/>
    <property type="match status" value="1"/>
</dbReference>
<dbReference type="SUPFAM" id="SSF51735">
    <property type="entry name" value="NAD(P)-binding Rossmann-fold domains"/>
    <property type="match status" value="1"/>
</dbReference>
<dbReference type="PROSITE" id="PS00836">
    <property type="entry name" value="ALADH_PNT_1"/>
    <property type="match status" value="1"/>
</dbReference>
<dbReference type="PROSITE" id="PS00837">
    <property type="entry name" value="ALADH_PNT_2"/>
    <property type="match status" value="1"/>
</dbReference>
<evidence type="ECO:0000250" key="1">
    <source>
        <dbReference type="UniProtKB" id="P07001"/>
    </source>
</evidence>
<evidence type="ECO:0000250" key="2">
    <source>
        <dbReference type="UniProtKB" id="P11024"/>
    </source>
</evidence>
<evidence type="ECO:0000250" key="3">
    <source>
        <dbReference type="UniProtKB" id="Q13423"/>
    </source>
</evidence>
<evidence type="ECO:0000250" key="4">
    <source>
        <dbReference type="UniProtKB" id="Q2RSB2"/>
    </source>
</evidence>
<evidence type="ECO:0000250" key="5">
    <source>
        <dbReference type="UniProtKB" id="Q61941"/>
    </source>
</evidence>
<evidence type="ECO:0000255" key="6"/>
<evidence type="ECO:0000269" key="7">
    <source>
    </source>
</evidence>
<evidence type="ECO:0000305" key="8"/>
<evidence type="ECO:0000305" key="9">
    <source>
    </source>
</evidence>
<evidence type="ECO:0000312" key="10">
    <source>
        <dbReference type="Proteomes" id="UP000002356"/>
    </source>
</evidence>
<evidence type="ECO:0007744" key="11">
    <source>
        <dbReference type="PDB" id="6QTI"/>
    </source>
</evidence>
<evidence type="ECO:0007744" key="12">
    <source>
        <dbReference type="PDB" id="6QUE"/>
    </source>
</evidence>
<evidence type="ECO:0007744" key="13">
    <source>
        <dbReference type="PDB" id="6S59"/>
    </source>
</evidence>
<evidence type="ECO:0007829" key="14">
    <source>
        <dbReference type="PDB" id="6QTI"/>
    </source>
</evidence>
<gene>
    <name type="primary">NNT</name>
</gene>
<feature type="transit peptide" description="Mitochondrion" evidence="2">
    <location>
        <begin position="1"/>
        <end position="43"/>
    </location>
</feature>
<feature type="chain" id="PRO_0000447642" description="NAD(P) transhydrogenase, mitochondrial">
    <location>
        <begin position="44"/>
        <end position="1086"/>
    </location>
</feature>
<feature type="topological domain" description="Mitochondrial matrix" evidence="2">
    <location>
        <begin position="44"/>
        <end position="474"/>
    </location>
</feature>
<feature type="transmembrane region" description="Helical" evidence="6">
    <location>
        <begin position="475"/>
        <end position="493"/>
    </location>
</feature>
<feature type="transmembrane region" description="Helical" evidence="6">
    <location>
        <begin position="501"/>
        <end position="521"/>
    </location>
</feature>
<feature type="transmembrane region" description="Helical" evidence="6">
    <location>
        <begin position="527"/>
        <end position="546"/>
    </location>
</feature>
<feature type="transmembrane region" description="Helical" evidence="6">
    <location>
        <begin position="558"/>
        <end position="578"/>
    </location>
</feature>
<feature type="topological domain" description="Mitochondrial matrix" evidence="2">
    <location>
        <begin position="579"/>
        <end position="595"/>
    </location>
</feature>
<feature type="transmembrane region" description="Helical" evidence="6">
    <location>
        <begin position="596"/>
        <end position="616"/>
    </location>
</feature>
<feature type="transmembrane region" description="Helical" evidence="6">
    <location>
        <begin position="622"/>
        <end position="642"/>
    </location>
</feature>
<feature type="transmembrane region" description="Helical" evidence="6">
    <location>
        <begin position="646"/>
        <end position="666"/>
    </location>
</feature>
<feature type="transmembrane region" description="Helical" evidence="6">
    <location>
        <begin position="672"/>
        <end position="691"/>
    </location>
</feature>
<feature type="transmembrane region" description="Helical" evidence="6">
    <location>
        <begin position="702"/>
        <end position="722"/>
    </location>
</feature>
<feature type="topological domain" description="Cytoplasmic" evidence="2">
    <location>
        <begin position="723"/>
        <end position="739"/>
    </location>
</feature>
<feature type="transmembrane region" description="Helical" evidence="6">
    <location>
        <begin position="740"/>
        <end position="760"/>
    </location>
</feature>
<feature type="transmembrane region" description="Helical" evidence="6">
    <location>
        <begin position="778"/>
        <end position="797"/>
    </location>
</feature>
<feature type="transmembrane region" description="Helical" evidence="6">
    <location>
        <begin position="801"/>
        <end position="819"/>
    </location>
</feature>
<feature type="transmembrane region" description="Helical" evidence="6">
    <location>
        <begin position="833"/>
        <end position="853"/>
    </location>
</feature>
<feature type="transmembrane region" description="Helical" evidence="6">
    <location>
        <begin position="857"/>
        <end position="879"/>
    </location>
</feature>
<feature type="topological domain" description="Mitochondrial matrix" evidence="2">
    <location>
        <begin position="880"/>
        <end position="1086"/>
    </location>
</feature>
<feature type="binding site" evidence="7 11 12">
    <location>
        <begin position="182"/>
        <end position="184"/>
    </location>
    <ligand>
        <name>NAD(+)</name>
        <dbReference type="ChEBI" id="CHEBI:57540"/>
    </ligand>
</feature>
<feature type="binding site" evidence="7 12">
    <location>
        <position position="237"/>
    </location>
    <ligand>
        <name>NAD(+)</name>
        <dbReference type="ChEBI" id="CHEBI:57540"/>
    </ligand>
</feature>
<feature type="binding site" evidence="7 11 12">
    <location>
        <begin position="257"/>
        <end position="259"/>
    </location>
    <ligand>
        <name>NAD(+)</name>
        <dbReference type="ChEBI" id="CHEBI:57540"/>
    </ligand>
</feature>
<feature type="binding site" evidence="7 11 12">
    <location>
        <position position="287"/>
    </location>
    <ligand>
        <name>NAD(+)</name>
        <dbReference type="ChEBI" id="CHEBI:57540"/>
    </ligand>
</feature>
<feature type="binding site" evidence="1">
    <location>
        <position position="300"/>
    </location>
    <ligand>
        <name>NAD(+)</name>
        <dbReference type="ChEBI" id="CHEBI:57540"/>
    </ligand>
</feature>
<feature type="binding site" evidence="7 11 12">
    <location>
        <position position="319"/>
    </location>
    <ligand>
        <name>NAD(+)</name>
        <dbReference type="ChEBI" id="CHEBI:57540"/>
    </ligand>
</feature>
<feature type="binding site" evidence="3">
    <location>
        <position position="933"/>
    </location>
    <ligand>
        <name>NADP(+)</name>
        <dbReference type="ChEBI" id="CHEBI:58349"/>
    </ligand>
</feature>
<feature type="binding site" evidence="7 11 12">
    <location>
        <begin position="965"/>
        <end position="970"/>
    </location>
    <ligand>
        <name>NADP(+)</name>
        <dbReference type="ChEBI" id="CHEBI:58349"/>
    </ligand>
</feature>
<feature type="binding site" evidence="7 11 12">
    <location>
        <begin position="1007"/>
        <end position="1011"/>
    </location>
    <ligand>
        <name>NADP(+)</name>
        <dbReference type="ChEBI" id="CHEBI:58349"/>
    </ligand>
</feature>
<feature type="binding site" evidence="3">
    <location>
        <begin position="1026"/>
        <end position="1027"/>
    </location>
    <ligand>
        <name>NADP(+)</name>
        <dbReference type="ChEBI" id="CHEBI:58349"/>
    </ligand>
</feature>
<feature type="binding site" evidence="7 11 12">
    <location>
        <begin position="1042"/>
        <end position="1049"/>
    </location>
    <ligand>
        <name>NADP(+)</name>
        <dbReference type="ChEBI" id="CHEBI:58349"/>
    </ligand>
</feature>
<feature type="binding site" evidence="3">
    <location>
        <begin position="1068"/>
        <end position="1069"/>
    </location>
    <ligand>
        <name>NADP(+)</name>
        <dbReference type="ChEBI" id="CHEBI:58349"/>
    </ligand>
</feature>
<feature type="modified residue" description="N6-acetyllysine" evidence="3">
    <location>
        <position position="70"/>
    </location>
</feature>
<feature type="modified residue" description="N6-succinyllysine" evidence="5">
    <location>
        <position position="117"/>
    </location>
</feature>
<feature type="modified residue" description="N6-succinyllysine" evidence="5">
    <location>
        <position position="224"/>
    </location>
</feature>
<feature type="modified residue" description="N6-succinyllysine" evidence="5">
    <location>
        <position position="294"/>
    </location>
</feature>
<feature type="modified residue" description="N6-succinyllysine" evidence="5">
    <location>
        <position position="331"/>
    </location>
</feature>
<feature type="modified residue" description="N6-acetyllysine" evidence="3">
    <location>
        <position position="397"/>
    </location>
</feature>
<feature type="modified residue" description="N6-succinyllysine" evidence="5">
    <location>
        <position position="1079"/>
    </location>
</feature>
<feature type="strand" evidence="14">
    <location>
        <begin position="58"/>
        <end position="61"/>
    </location>
</feature>
<feature type="helix" evidence="14">
    <location>
        <begin position="77"/>
        <end position="79"/>
    </location>
</feature>
<feature type="turn" evidence="14">
    <location>
        <begin position="80"/>
        <end position="83"/>
    </location>
</feature>
<feature type="strand" evidence="14">
    <location>
        <begin position="84"/>
        <end position="86"/>
    </location>
</feature>
<feature type="strand" evidence="14">
    <location>
        <begin position="88"/>
        <end position="92"/>
    </location>
</feature>
<feature type="turn" evidence="14">
    <location>
        <begin position="93"/>
        <end position="100"/>
    </location>
</feature>
<feature type="helix" evidence="14">
    <location>
        <begin position="103"/>
        <end position="109"/>
    </location>
</feature>
<feature type="strand" evidence="14">
    <location>
        <begin position="112"/>
        <end position="114"/>
    </location>
</feature>
<feature type="turn" evidence="14">
    <location>
        <begin position="117"/>
        <end position="119"/>
    </location>
</feature>
<feature type="strand" evidence="14">
    <location>
        <begin position="120"/>
        <end position="126"/>
    </location>
</feature>
<feature type="turn" evidence="14">
    <location>
        <begin position="135"/>
        <end position="138"/>
    </location>
</feature>
<feature type="turn" evidence="14">
    <location>
        <begin position="141"/>
        <end position="143"/>
    </location>
</feature>
<feature type="strand" evidence="14">
    <location>
        <begin position="150"/>
        <end position="153"/>
    </location>
</feature>
<feature type="turn" evidence="14">
    <location>
        <begin position="157"/>
        <end position="159"/>
    </location>
</feature>
<feature type="helix" evidence="14">
    <location>
        <begin position="161"/>
        <end position="169"/>
    </location>
</feature>
<feature type="strand" evidence="14">
    <location>
        <begin position="173"/>
        <end position="176"/>
    </location>
</feature>
<feature type="helix" evidence="14">
    <location>
        <begin position="177"/>
        <end position="179"/>
    </location>
</feature>
<feature type="helix" evidence="14">
    <location>
        <begin position="184"/>
        <end position="186"/>
    </location>
</feature>
<feature type="strand" evidence="14">
    <location>
        <begin position="187"/>
        <end position="189"/>
    </location>
</feature>
<feature type="helix" evidence="14">
    <location>
        <begin position="191"/>
        <end position="207"/>
    </location>
</feature>
<feature type="turn" evidence="14">
    <location>
        <begin position="208"/>
        <end position="210"/>
    </location>
</feature>
<feature type="strand" evidence="14">
    <location>
        <begin position="211"/>
        <end position="213"/>
    </location>
</feature>
<feature type="strand" evidence="14">
    <location>
        <begin position="229"/>
        <end position="233"/>
    </location>
</feature>
<feature type="helix" evidence="14">
    <location>
        <begin position="238"/>
        <end position="247"/>
    </location>
</feature>
<feature type="turn" evidence="14">
    <location>
        <begin position="248"/>
        <end position="250"/>
    </location>
</feature>
<feature type="helix" evidence="14">
    <location>
        <begin position="260"/>
        <end position="269"/>
    </location>
</feature>
<feature type="strand" evidence="14">
    <location>
        <begin position="285"/>
        <end position="289"/>
    </location>
</feature>
<feature type="helix" evidence="14">
    <location>
        <begin position="294"/>
        <end position="306"/>
    </location>
</feature>
<feature type="turn" evidence="14">
    <location>
        <begin position="307"/>
        <end position="310"/>
    </location>
</feature>
<feature type="strand" evidence="14">
    <location>
        <begin position="312"/>
        <end position="316"/>
    </location>
</feature>
<feature type="turn" evidence="14">
    <location>
        <begin position="331"/>
        <end position="333"/>
    </location>
</feature>
<feature type="strand" evidence="14">
    <location>
        <begin position="342"/>
        <end position="345"/>
    </location>
</feature>
<feature type="strand" evidence="14">
    <location>
        <begin position="348"/>
        <end position="351"/>
    </location>
</feature>
<feature type="strand" evidence="14">
    <location>
        <begin position="364"/>
        <end position="367"/>
    </location>
</feature>
<feature type="strand" evidence="14">
    <location>
        <begin position="369"/>
        <end position="371"/>
    </location>
</feature>
<feature type="turn" evidence="14">
    <location>
        <begin position="377"/>
        <end position="380"/>
    </location>
</feature>
<feature type="helix" evidence="14">
    <location>
        <begin position="381"/>
        <end position="398"/>
    </location>
</feature>
<feature type="strand" evidence="14">
    <location>
        <begin position="402"/>
        <end position="404"/>
    </location>
</feature>
<feature type="helix" evidence="14">
    <location>
        <begin position="419"/>
        <end position="426"/>
    </location>
</feature>
<feature type="strand" evidence="14">
    <location>
        <begin position="427"/>
        <end position="430"/>
    </location>
</feature>
<feature type="helix" evidence="14">
    <location>
        <begin position="455"/>
        <end position="462"/>
    </location>
</feature>
<feature type="helix" evidence="14">
    <location>
        <begin position="463"/>
        <end position="465"/>
    </location>
</feature>
<feature type="helix" evidence="14">
    <location>
        <begin position="468"/>
        <end position="491"/>
    </location>
</feature>
<feature type="helix" evidence="14">
    <location>
        <begin position="496"/>
        <end position="517"/>
    </location>
</feature>
<feature type="helix" evidence="14">
    <location>
        <begin position="521"/>
        <end position="523"/>
    </location>
</feature>
<feature type="helix" evidence="14">
    <location>
        <begin position="524"/>
        <end position="534"/>
    </location>
</feature>
<feature type="helix" evidence="14">
    <location>
        <begin position="535"/>
        <end position="537"/>
    </location>
</feature>
<feature type="helix" evidence="14">
    <location>
        <begin position="538"/>
        <end position="544"/>
    </location>
</feature>
<feature type="strand" evidence="14">
    <location>
        <begin position="548"/>
        <end position="551"/>
    </location>
</feature>
<feature type="helix" evidence="14">
    <location>
        <begin position="555"/>
        <end position="582"/>
    </location>
</feature>
<feature type="helix" evidence="14">
    <location>
        <begin position="595"/>
        <end position="598"/>
    </location>
</feature>
<feature type="helix" evidence="14">
    <location>
        <begin position="599"/>
        <end position="614"/>
    </location>
</feature>
<feature type="helix" evidence="14">
    <location>
        <begin position="620"/>
        <end position="636"/>
    </location>
</feature>
<feature type="turn" evidence="14">
    <location>
        <begin position="637"/>
        <end position="639"/>
    </location>
</feature>
<feature type="strand" evidence="14">
    <location>
        <begin position="640"/>
        <end position="643"/>
    </location>
</feature>
<feature type="helix" evidence="14">
    <location>
        <begin position="646"/>
        <end position="666"/>
    </location>
</feature>
<feature type="helix" evidence="14">
    <location>
        <begin position="670"/>
        <end position="690"/>
    </location>
</feature>
<feature type="strand" evidence="14">
    <location>
        <begin position="691"/>
        <end position="694"/>
    </location>
</feature>
<feature type="helix" evidence="14">
    <location>
        <begin position="696"/>
        <end position="698"/>
    </location>
</feature>
<feature type="helix" evidence="14">
    <location>
        <begin position="699"/>
        <end position="724"/>
    </location>
</feature>
<feature type="helix" evidence="14">
    <location>
        <begin position="726"/>
        <end position="728"/>
    </location>
</feature>
<feature type="helix" evidence="14">
    <location>
        <begin position="735"/>
        <end position="764"/>
    </location>
</feature>
<feature type="strand" evidence="14">
    <location>
        <begin position="765"/>
        <end position="767"/>
    </location>
</feature>
<feature type="strand" evidence="14">
    <location>
        <begin position="775"/>
        <end position="778"/>
    </location>
</feature>
<feature type="helix" evidence="14">
    <location>
        <begin position="779"/>
        <end position="790"/>
    </location>
</feature>
<feature type="helix" evidence="14">
    <location>
        <begin position="792"/>
        <end position="795"/>
    </location>
</feature>
<feature type="helix" evidence="14">
    <location>
        <begin position="802"/>
        <end position="823"/>
    </location>
</feature>
<feature type="strand" evidence="14">
    <location>
        <begin position="828"/>
        <end position="830"/>
    </location>
</feature>
<feature type="helix" evidence="14">
    <location>
        <begin position="831"/>
        <end position="852"/>
    </location>
</feature>
<feature type="helix" evidence="14">
    <location>
        <begin position="856"/>
        <end position="864"/>
    </location>
</feature>
<feature type="helix" evidence="14">
    <location>
        <begin position="869"/>
        <end position="879"/>
    </location>
</feature>
<feature type="helix" evidence="14">
    <location>
        <begin position="884"/>
        <end position="888"/>
    </location>
</feature>
<feature type="helix" evidence="14">
    <location>
        <begin position="914"/>
        <end position="923"/>
    </location>
</feature>
<feature type="strand" evidence="14">
    <location>
        <begin position="925"/>
        <end position="931"/>
    </location>
</feature>
<feature type="helix" evidence="14">
    <location>
        <begin position="933"/>
        <end position="937"/>
    </location>
</feature>
<feature type="helix" evidence="14">
    <location>
        <begin position="941"/>
        <end position="953"/>
    </location>
</feature>
<feature type="strand" evidence="14">
    <location>
        <begin position="957"/>
        <end position="962"/>
    </location>
</feature>
<feature type="strand" evidence="14">
    <location>
        <begin position="967"/>
        <end position="969"/>
    </location>
</feature>
<feature type="helix" evidence="14">
    <location>
        <begin position="972"/>
        <end position="980"/>
    </location>
</feature>
<feature type="helix" evidence="14">
    <location>
        <begin position="984"/>
        <end position="986"/>
    </location>
</feature>
<feature type="strand" evidence="14">
    <location>
        <begin position="987"/>
        <end position="989"/>
    </location>
</feature>
<feature type="helix" evidence="14">
    <location>
        <begin position="990"/>
        <end position="993"/>
    </location>
</feature>
<feature type="strand" evidence="14">
    <location>
        <begin position="1001"/>
        <end position="1007"/>
    </location>
</feature>
<feature type="helix" evidence="14">
    <location>
        <begin position="1015"/>
        <end position="1018"/>
    </location>
</feature>
<feature type="turn" evidence="14">
    <location>
        <begin position="1023"/>
        <end position="1026"/>
    </location>
</feature>
<feature type="helix" evidence="14">
    <location>
        <begin position="1032"/>
        <end position="1034"/>
    </location>
</feature>
<feature type="strand" evidence="14">
    <location>
        <begin position="1038"/>
        <end position="1041"/>
    </location>
</feature>
<feature type="strand" evidence="14">
    <location>
        <begin position="1043"/>
        <end position="1045"/>
    </location>
</feature>
<feature type="strand" evidence="14">
    <location>
        <begin position="1048"/>
        <end position="1050"/>
    </location>
</feature>
<feature type="turn" evidence="14">
    <location>
        <begin position="1055"/>
        <end position="1058"/>
    </location>
</feature>
<feature type="strand" evidence="14">
    <location>
        <begin position="1062"/>
        <end position="1064"/>
    </location>
</feature>
<feature type="helix" evidence="14">
    <location>
        <begin position="1069"/>
        <end position="1084"/>
    </location>
</feature>
<organism evidence="10">
    <name type="scientific">Ovis aries</name>
    <name type="common">Sheep</name>
    <dbReference type="NCBI Taxonomy" id="9940"/>
    <lineage>
        <taxon>Eukaryota</taxon>
        <taxon>Metazoa</taxon>
        <taxon>Chordata</taxon>
        <taxon>Craniata</taxon>
        <taxon>Vertebrata</taxon>
        <taxon>Euteleostomi</taxon>
        <taxon>Mammalia</taxon>
        <taxon>Eutheria</taxon>
        <taxon>Laurasiatheria</taxon>
        <taxon>Artiodactyla</taxon>
        <taxon>Ruminantia</taxon>
        <taxon>Pecora</taxon>
        <taxon>Bovidae</taxon>
        <taxon>Caprinae</taxon>
        <taxon>Ovis</taxon>
    </lineage>
</organism>
<sequence>MANLLKTVVTGCSCPFLSNLGSCKVLPGKKNFLRAFHTHRILWCKAPVKPGIPYKQLTVGVPKEIFQNEKRVALSPAGVQALVKQGFNVVVESGAGEASKFSDDHYRAAGAQIQGAKEVLASDLVVKVRAPMLNPTLGIHEADLLKTSGTLISFIYPAQNPDLLNKLSKRNTTVLAMDQVPRVTIAQGYDALSSMANIAGYKAVVLAANHFGRFFTGQITAAGKVPPAKILIVGGGVAGLASAGAAKSMGAIVRGFDTRAAALEQFKSLGAEPLEVDLKESGEGQGGYAKEMSKEFIEAEMKLFAQQCKEVDILISTALIPGKKAPILFNKEMIESMKEGSVVVDLAAEAGGNFETTKPGELYVHKGITHIGYTDLPSRMATQASTLYSNNITKLLKAISPDKDNFYFEVKDDFDFGTMGHVIRGTVVMKDGQVIFPAPTPKNIPQGAPVKQKTVAELEAEKAATITPFRKTMTSASVYTAGLTGILGLGIAAPNLAFSQMVTTFGLAGIVGYHTVWGVTPALHSPLMSVTNAISGLTAVGGLVLMGGHLYPSTTSQGLAALATFISSVNIAGGFLVTQRMLDMFKRPTDPPEYNYLYLLPAGTFVGGYLASLYSGYNIEQIMYLGSGLCCVGALAGLSTQGTARLGNALGMIGVAGGLAATLGGLKPCPELLAQMSGAMALGGTIGLTIAKRIQISDLPQLVAAFHSLVGLAAVLTCIAEYIIEYPHFATDAAANLTKIVAYLGTYIGGVTFSGSLVAYGKLQGILKSAPLLLPGRHLLNAGLLAASVGGIIPFMMDPSFTTGITCLGSVSALSAVMGVTLTAAIGGADMPVVITVLNSYSGWALCAEGFLLNNNLLTIVGALIGSSGAILSYIMCVAMNRSLANVILGGYGTTSTAGGKPMEISGTHTEINLDNAIDMIREANSIIITPGYGLCAAKAQYPIADLVKMLSEQGKKVRFGIHPVAGRMPGQLNVLLAEAGVPYDIVLEMDEINHDFPDTDLVLVIGANDTVNSAAQEDPNSIIAGMPVLEVWKSKQVIVMKRSLGVGYAAVDNPIFYKPNTAMLLGDAKKTCDALQAKVRESYQK</sequence>
<accession>W5PFI3</accession>
<comment type="function">
    <text evidence="1 3">The transhydrogenation between NADH and NADP is coupled to respiration and ATP hydrolysis and functions as a proton pump across the membrane (By similarity). May play a role in reactive oxygen species (ROS) detoxification in the adrenal gland (By similarity).</text>
</comment>
<comment type="catalytic activity">
    <reaction evidence="9">
        <text>NAD(+) + NADPH + H(+)(in) = NADH + NADP(+) + H(+)(out)</text>
        <dbReference type="Rhea" id="RHEA:47992"/>
        <dbReference type="ChEBI" id="CHEBI:15378"/>
        <dbReference type="ChEBI" id="CHEBI:57540"/>
        <dbReference type="ChEBI" id="CHEBI:57783"/>
        <dbReference type="ChEBI" id="CHEBI:57945"/>
        <dbReference type="ChEBI" id="CHEBI:58349"/>
        <dbReference type="EC" id="7.1.1.1"/>
    </reaction>
</comment>
<comment type="subunit">
    <text evidence="7">Homodimer.</text>
</comment>
<comment type="interaction">
    <interactant intactId="EBI-22054528">
        <id>W5PFI3</id>
    </interactant>
    <interactant intactId="EBI-22054528">
        <id>W5PFI3</id>
        <label>NNT</label>
    </interactant>
    <organismsDiffer>false</organismsDiffer>
    <experiments>2</experiments>
</comment>
<comment type="subcellular location">
    <subcellularLocation>
        <location evidence="8">Mitochondrion inner membrane</location>
        <topology evidence="8">Multi-pass membrane protein</topology>
        <orientation evidence="8">Matrix side</orientation>
    </subcellularLocation>
</comment>
<comment type="similarity">
    <text evidence="8">In the N-terminal section; belongs to the AlaDH/PNT family.</text>
</comment>
<comment type="similarity">
    <text evidence="8">In the C-terminal section; belongs to the PNT beta subunit family.</text>
</comment>
<reference evidence="10" key="1">
    <citation type="journal article" date="2010" name="Anim. Genet.">
        <title>The sheep genome reference sequence: a work in progress.</title>
        <authorList>
            <person name="Archibald A.L."/>
            <person name="Cockett N.E."/>
            <person name="Dalrymple B.P."/>
            <person name="Faraut T."/>
            <person name="Kijas J.W."/>
            <person name="Maddox J.F."/>
            <person name="McEwan J.C."/>
            <person name="Hutton Oddy V."/>
            <person name="Raadsma H.W."/>
            <person name="Wade C."/>
            <person name="Wang J."/>
            <person name="Wang W."/>
            <person name="Xun X."/>
        </authorList>
    </citation>
    <scope>NUCLEOTIDE SEQUENCE [LARGE SCALE GENOMIC DNA]</scope>
    <source>
        <strain>Texel</strain>
    </source>
</reference>
<reference evidence="11 12 13" key="2">
    <citation type="journal article" date="2019" name="Nature">
        <title>Structure and mechanism of mitochondrial proton-translocating transhydrogenase.</title>
        <authorList>
            <person name="Kampjut D."/>
            <person name="Sazanov L.A."/>
        </authorList>
    </citation>
    <scope>STRUCTURE BY ELECTRON MICROSCOPY (2.9 ANGSTROMS) IN COMPLEX WITH NADPH AND NADP</scope>
    <scope>SUBUNIT</scope>
</reference>
<keyword id="KW-0002">3D-structure</keyword>
<keyword id="KW-0007">Acetylation</keyword>
<keyword id="KW-0472">Membrane</keyword>
<keyword id="KW-0496">Mitochondrion</keyword>
<keyword id="KW-0999">Mitochondrion inner membrane</keyword>
<keyword id="KW-0520">NAD</keyword>
<keyword id="KW-0521">NADP</keyword>
<keyword id="KW-1185">Reference proteome</keyword>
<keyword id="KW-0809">Transit peptide</keyword>
<keyword id="KW-1278">Translocase</keyword>
<keyword id="KW-0812">Transmembrane</keyword>
<keyword id="KW-1133">Transmembrane helix</keyword>
<name>NNTM_SHEEP</name>